<name>MNHD1_STAAR</name>
<comment type="function">
    <text evidence="1">Mnh complex is a Na(+)/H(+) antiporter involved in Na(+) excretion.</text>
</comment>
<comment type="subunit">
    <text evidence="1">May form a heterooligomeric complex that consists of seven subunits: mnhA1, mnhB1, mnhC1, mnhD1, mnhE1, mnhF1 and mnhG1.</text>
</comment>
<comment type="subcellular location">
    <subcellularLocation>
        <location evidence="3">Cell membrane</location>
        <topology evidence="3">Multi-pass membrane protein</topology>
    </subcellularLocation>
</comment>
<comment type="similarity">
    <text evidence="3">Belongs to the CPA3 antiporters (TC 2.A.63) subunit D family.</text>
</comment>
<dbReference type="EMBL" id="BX571856">
    <property type="protein sequence ID" value="CAG39917.1"/>
    <property type="molecule type" value="Genomic_DNA"/>
</dbReference>
<dbReference type="RefSeq" id="WP_000573088.1">
    <property type="nucleotide sequence ID" value="NC_002952.2"/>
</dbReference>
<dbReference type="SMR" id="Q6GID9"/>
<dbReference type="KEGG" id="sar:SAR0911"/>
<dbReference type="HOGENOM" id="CLU_007100_9_2_9"/>
<dbReference type="Proteomes" id="UP000000596">
    <property type="component" value="Chromosome"/>
</dbReference>
<dbReference type="GO" id="GO:0005886">
    <property type="term" value="C:plasma membrane"/>
    <property type="evidence" value="ECO:0007669"/>
    <property type="project" value="UniProtKB-SubCell"/>
</dbReference>
<dbReference type="GO" id="GO:0008137">
    <property type="term" value="F:NADH dehydrogenase (ubiquinone) activity"/>
    <property type="evidence" value="ECO:0007669"/>
    <property type="project" value="InterPro"/>
</dbReference>
<dbReference type="GO" id="GO:0015386">
    <property type="term" value="F:potassium:proton antiporter activity"/>
    <property type="evidence" value="ECO:0007669"/>
    <property type="project" value="InterPro"/>
</dbReference>
<dbReference type="GO" id="GO:0042773">
    <property type="term" value="P:ATP synthesis coupled electron transport"/>
    <property type="evidence" value="ECO:0007669"/>
    <property type="project" value="InterPro"/>
</dbReference>
<dbReference type="GO" id="GO:0006814">
    <property type="term" value="P:sodium ion transport"/>
    <property type="evidence" value="ECO:0007669"/>
    <property type="project" value="UniProtKB-KW"/>
</dbReference>
<dbReference type="InterPro" id="IPR050586">
    <property type="entry name" value="CPA3_Na-H_Antiporter_D"/>
</dbReference>
<dbReference type="InterPro" id="IPR004775">
    <property type="entry name" value="MnhD1"/>
</dbReference>
<dbReference type="InterPro" id="IPR003918">
    <property type="entry name" value="NADH_UbQ_OxRdtase"/>
</dbReference>
<dbReference type="InterPro" id="IPR001750">
    <property type="entry name" value="ND/Mrp_TM"/>
</dbReference>
<dbReference type="NCBIfam" id="TIGR00944">
    <property type="entry name" value="2a6301s04"/>
    <property type="match status" value="1"/>
</dbReference>
<dbReference type="NCBIfam" id="NF005818">
    <property type="entry name" value="PRK07691.1"/>
    <property type="match status" value="1"/>
</dbReference>
<dbReference type="PANTHER" id="PTHR42703:SF1">
    <property type="entry name" value="NA(+)_H(+) ANTIPORTER SUBUNIT D1"/>
    <property type="match status" value="1"/>
</dbReference>
<dbReference type="PANTHER" id="PTHR42703">
    <property type="entry name" value="NADH DEHYDROGENASE"/>
    <property type="match status" value="1"/>
</dbReference>
<dbReference type="Pfam" id="PF00361">
    <property type="entry name" value="Proton_antipo_M"/>
    <property type="match status" value="1"/>
</dbReference>
<dbReference type="PRINTS" id="PR01437">
    <property type="entry name" value="NUOXDRDTASE4"/>
</dbReference>
<accession>Q6GID9</accession>
<evidence type="ECO:0000250" key="1"/>
<evidence type="ECO:0000255" key="2"/>
<evidence type="ECO:0000305" key="3"/>
<keyword id="KW-0050">Antiport</keyword>
<keyword id="KW-1003">Cell membrane</keyword>
<keyword id="KW-0375">Hydrogen ion transport</keyword>
<keyword id="KW-0406">Ion transport</keyword>
<keyword id="KW-0472">Membrane</keyword>
<keyword id="KW-0915">Sodium</keyword>
<keyword id="KW-0739">Sodium transport</keyword>
<keyword id="KW-0812">Transmembrane</keyword>
<keyword id="KW-1133">Transmembrane helix</keyword>
<keyword id="KW-0813">Transport</keyword>
<organism>
    <name type="scientific">Staphylococcus aureus (strain MRSA252)</name>
    <dbReference type="NCBI Taxonomy" id="282458"/>
    <lineage>
        <taxon>Bacteria</taxon>
        <taxon>Bacillati</taxon>
        <taxon>Bacillota</taxon>
        <taxon>Bacilli</taxon>
        <taxon>Bacillales</taxon>
        <taxon>Staphylococcaceae</taxon>
        <taxon>Staphylococcus</taxon>
    </lineage>
</organism>
<sequence>MIESNMLVLTLVIPVITAILLVFIGKRPIIKRYVALGGTLLTLVAAIINLANVVKHGPLRVELGSWKAPYSIVFVLDIFSALLIITSIIITAIVILYSYQTIGIERERYYYYFSVLFMLIGIIGAFTTGDIFNLFVFFEVFLMSSYFLLVIGSTKIQLQETIKYVLVNVVSSSFFVMGVAILYSVVGTLNLADISNKLANLSAHDSGLVNIVFILFIFVFATKAGVFPMFVWLPSAYYAPPIPIIAFFGALLTKVGVYAITRTLSLFFSDNVSFSHYVILFLALLTIIFGCVGAVAYANIKKIILYNVMIAVGVILVGVAMMTESGMIGAIYYTLHDMLVKLALFLLIGIMIKITGTADLRQFGGLIKRYPVLGWSFFIAALSLAGIPPLSGFYGKFFIVQSTFERGFYLSGVIVLLSSLVVLYSVIRIFLQGFFGQPKGYDLNNKVDVKYLTTIAIVAVVITVLYGLSADYLYPMVKAGAETFYNPSTYVKAVLGGK</sequence>
<protein>
    <recommendedName>
        <fullName>Na(+)/H(+) antiporter subunit D1</fullName>
    </recommendedName>
    <alternativeName>
        <fullName>Mnh complex subunit D1</fullName>
    </alternativeName>
</protein>
<feature type="chain" id="PRO_0000217079" description="Na(+)/H(+) antiporter subunit D1">
    <location>
        <begin position="1"/>
        <end position="498"/>
    </location>
</feature>
<feature type="transmembrane region" description="Helical" evidence="2">
    <location>
        <begin position="6"/>
        <end position="25"/>
    </location>
</feature>
<feature type="transmembrane region" description="Helical" evidence="2">
    <location>
        <begin position="32"/>
        <end position="54"/>
    </location>
</feature>
<feature type="transmembrane region" description="Helical" evidence="2">
    <location>
        <begin position="74"/>
        <end position="96"/>
    </location>
</feature>
<feature type="transmembrane region" description="Helical" evidence="2">
    <location>
        <begin position="109"/>
        <end position="126"/>
    </location>
</feature>
<feature type="transmembrane region" description="Helical" evidence="2">
    <location>
        <begin position="131"/>
        <end position="153"/>
    </location>
</feature>
<feature type="transmembrane region" description="Helical" evidence="2">
    <location>
        <begin position="165"/>
        <end position="187"/>
    </location>
</feature>
<feature type="transmembrane region" description="Helical" evidence="2">
    <location>
        <begin position="211"/>
        <end position="233"/>
    </location>
</feature>
<feature type="transmembrane region" description="Helical" evidence="2">
    <location>
        <begin position="238"/>
        <end position="260"/>
    </location>
</feature>
<feature type="transmembrane region" description="Helical" evidence="2">
    <location>
        <begin position="275"/>
        <end position="297"/>
    </location>
</feature>
<feature type="transmembrane region" description="Helical" evidence="2">
    <location>
        <begin position="304"/>
        <end position="323"/>
    </location>
</feature>
<feature type="transmembrane region" description="Helical" evidence="2">
    <location>
        <begin position="328"/>
        <end position="350"/>
    </location>
</feature>
<feature type="transmembrane region" description="Helical" evidence="2">
    <location>
        <begin position="371"/>
        <end position="393"/>
    </location>
</feature>
<feature type="transmembrane region" description="Helical" evidence="2">
    <location>
        <begin position="408"/>
        <end position="430"/>
    </location>
</feature>
<feature type="transmembrane region" description="Helical" evidence="2">
    <location>
        <begin position="451"/>
        <end position="470"/>
    </location>
</feature>
<gene>
    <name type="primary">mnhD1</name>
    <name type="ordered locus">SAR0911</name>
</gene>
<reference key="1">
    <citation type="journal article" date="2004" name="Proc. Natl. Acad. Sci. U.S.A.">
        <title>Complete genomes of two clinical Staphylococcus aureus strains: evidence for the rapid evolution of virulence and drug resistance.</title>
        <authorList>
            <person name="Holden M.T.G."/>
            <person name="Feil E.J."/>
            <person name="Lindsay J.A."/>
            <person name="Peacock S.J."/>
            <person name="Day N.P.J."/>
            <person name="Enright M.C."/>
            <person name="Foster T.J."/>
            <person name="Moore C.E."/>
            <person name="Hurst L."/>
            <person name="Atkin R."/>
            <person name="Barron A."/>
            <person name="Bason N."/>
            <person name="Bentley S.D."/>
            <person name="Chillingworth C."/>
            <person name="Chillingworth T."/>
            <person name="Churcher C."/>
            <person name="Clark L."/>
            <person name="Corton C."/>
            <person name="Cronin A."/>
            <person name="Doggett J."/>
            <person name="Dowd L."/>
            <person name="Feltwell T."/>
            <person name="Hance Z."/>
            <person name="Harris B."/>
            <person name="Hauser H."/>
            <person name="Holroyd S."/>
            <person name="Jagels K."/>
            <person name="James K.D."/>
            <person name="Lennard N."/>
            <person name="Line A."/>
            <person name="Mayes R."/>
            <person name="Moule S."/>
            <person name="Mungall K."/>
            <person name="Ormond D."/>
            <person name="Quail M.A."/>
            <person name="Rabbinowitsch E."/>
            <person name="Rutherford K.M."/>
            <person name="Sanders M."/>
            <person name="Sharp S."/>
            <person name="Simmonds M."/>
            <person name="Stevens K."/>
            <person name="Whitehead S."/>
            <person name="Barrell B.G."/>
            <person name="Spratt B.G."/>
            <person name="Parkhill J."/>
        </authorList>
    </citation>
    <scope>NUCLEOTIDE SEQUENCE [LARGE SCALE GENOMIC DNA]</scope>
    <source>
        <strain>MRSA252</strain>
    </source>
</reference>
<proteinExistence type="inferred from homology"/>